<sequence>MTTNTQEINFQQQELKGRDFLTLADYTKDEINYLIDLADYLKKQHKDGVIFEPLKGKTLGMIFEKSSTRTRVSFETGIYQLGGLGIFLSSKDIQIGRGETIADTAKVLSGYLDGIMIRTFAQEDVEELAKHASIPVINGLTDLYHPCQVLADLQTIKEVKGKLHGVKLVYIGDGNNMTHSLMLGAAKTGMHMVAVTPDGYTPNKEVLTKAKSIANQHGAIIEWTSDIATAVQEADVIYTDVWASMGQEEEQQQREKDFENYQVNESLLEKAKTDVIFMHCLPAHRGEEVTAGVIDGKQSVVFQQAENRLHAQKALMTALMAD</sequence>
<dbReference type="EC" id="2.1.3.3" evidence="2"/>
<dbReference type="EMBL" id="BA000028">
    <property type="protein sequence ID" value="BAC12416.1"/>
    <property type="molecule type" value="Genomic_DNA"/>
</dbReference>
<dbReference type="RefSeq" id="WP_011064866.1">
    <property type="nucleotide sequence ID" value="NC_004193.1"/>
</dbReference>
<dbReference type="SMR" id="Q8ET05"/>
<dbReference type="STRING" id="221109.gene:10732663"/>
<dbReference type="KEGG" id="oih:OB0460"/>
<dbReference type="eggNOG" id="COG0078">
    <property type="taxonomic scope" value="Bacteria"/>
</dbReference>
<dbReference type="HOGENOM" id="CLU_043846_3_2_9"/>
<dbReference type="OrthoDB" id="9802587at2"/>
<dbReference type="PhylomeDB" id="Q8ET05"/>
<dbReference type="UniPathway" id="UPA00068">
    <property type="reaction ID" value="UER00112"/>
</dbReference>
<dbReference type="Proteomes" id="UP000000822">
    <property type="component" value="Chromosome"/>
</dbReference>
<dbReference type="GO" id="GO:0005737">
    <property type="term" value="C:cytoplasm"/>
    <property type="evidence" value="ECO:0007669"/>
    <property type="project" value="UniProtKB-SubCell"/>
</dbReference>
<dbReference type="GO" id="GO:0016597">
    <property type="term" value="F:amino acid binding"/>
    <property type="evidence" value="ECO:0007669"/>
    <property type="project" value="InterPro"/>
</dbReference>
<dbReference type="GO" id="GO:0004585">
    <property type="term" value="F:ornithine carbamoyltransferase activity"/>
    <property type="evidence" value="ECO:0007669"/>
    <property type="project" value="UniProtKB-UniRule"/>
</dbReference>
<dbReference type="GO" id="GO:0042450">
    <property type="term" value="P:arginine biosynthetic process via ornithine"/>
    <property type="evidence" value="ECO:0007669"/>
    <property type="project" value="TreeGrafter"/>
</dbReference>
<dbReference type="GO" id="GO:0019240">
    <property type="term" value="P:citrulline biosynthetic process"/>
    <property type="evidence" value="ECO:0007669"/>
    <property type="project" value="TreeGrafter"/>
</dbReference>
<dbReference type="GO" id="GO:0006526">
    <property type="term" value="P:L-arginine biosynthetic process"/>
    <property type="evidence" value="ECO:0007669"/>
    <property type="project" value="UniProtKB-UniRule"/>
</dbReference>
<dbReference type="FunFam" id="3.40.50.1370:FF:000008">
    <property type="entry name" value="Ornithine carbamoyltransferase"/>
    <property type="match status" value="1"/>
</dbReference>
<dbReference type="FunFam" id="3.40.50.1370:FF:000016">
    <property type="entry name" value="Ornithine carbamoyltransferase"/>
    <property type="match status" value="1"/>
</dbReference>
<dbReference type="Gene3D" id="3.40.50.1370">
    <property type="entry name" value="Aspartate/ornithine carbamoyltransferase"/>
    <property type="match status" value="2"/>
</dbReference>
<dbReference type="HAMAP" id="MF_01109">
    <property type="entry name" value="OTCase"/>
    <property type="match status" value="1"/>
</dbReference>
<dbReference type="InterPro" id="IPR006132">
    <property type="entry name" value="Asp/Orn_carbamoyltranf_P-bd"/>
</dbReference>
<dbReference type="InterPro" id="IPR006130">
    <property type="entry name" value="Asp/Orn_carbamoylTrfase"/>
</dbReference>
<dbReference type="InterPro" id="IPR036901">
    <property type="entry name" value="Asp/Orn_carbamoylTrfase_sf"/>
</dbReference>
<dbReference type="InterPro" id="IPR006131">
    <property type="entry name" value="Asp_carbamoyltransf_Asp/Orn-bd"/>
</dbReference>
<dbReference type="InterPro" id="IPR002292">
    <property type="entry name" value="Orn/put_carbamltrans"/>
</dbReference>
<dbReference type="InterPro" id="IPR024904">
    <property type="entry name" value="OTCase_ArgI"/>
</dbReference>
<dbReference type="NCBIfam" id="TIGR00658">
    <property type="entry name" value="orni_carb_tr"/>
    <property type="match status" value="1"/>
</dbReference>
<dbReference type="NCBIfam" id="NF001986">
    <property type="entry name" value="PRK00779.1"/>
    <property type="match status" value="1"/>
</dbReference>
<dbReference type="PANTHER" id="PTHR45753">
    <property type="entry name" value="ORNITHINE CARBAMOYLTRANSFERASE, MITOCHONDRIAL"/>
    <property type="match status" value="1"/>
</dbReference>
<dbReference type="PANTHER" id="PTHR45753:SF3">
    <property type="entry name" value="ORNITHINE TRANSCARBAMYLASE, MITOCHONDRIAL"/>
    <property type="match status" value="1"/>
</dbReference>
<dbReference type="Pfam" id="PF00185">
    <property type="entry name" value="OTCace"/>
    <property type="match status" value="1"/>
</dbReference>
<dbReference type="Pfam" id="PF02729">
    <property type="entry name" value="OTCace_N"/>
    <property type="match status" value="1"/>
</dbReference>
<dbReference type="PRINTS" id="PR00100">
    <property type="entry name" value="AOTCASE"/>
</dbReference>
<dbReference type="PRINTS" id="PR00102">
    <property type="entry name" value="OTCASE"/>
</dbReference>
<dbReference type="SUPFAM" id="SSF53671">
    <property type="entry name" value="Aspartate/ornithine carbamoyltransferase"/>
    <property type="match status" value="1"/>
</dbReference>
<dbReference type="PROSITE" id="PS00097">
    <property type="entry name" value="CARBAMOYLTRANSFERASE"/>
    <property type="match status" value="1"/>
</dbReference>
<feature type="chain" id="PRO_0000112975" description="Ornithine carbamoyltransferase">
    <location>
        <begin position="1"/>
        <end position="322"/>
    </location>
</feature>
<feature type="binding site" evidence="2">
    <location>
        <begin position="67"/>
        <end position="70"/>
    </location>
    <ligand>
        <name>carbamoyl phosphate</name>
        <dbReference type="ChEBI" id="CHEBI:58228"/>
    </ligand>
</feature>
<feature type="binding site" evidence="2">
    <location>
        <position position="94"/>
    </location>
    <ligand>
        <name>carbamoyl phosphate</name>
        <dbReference type="ChEBI" id="CHEBI:58228"/>
    </ligand>
</feature>
<feature type="binding site" evidence="2">
    <location>
        <position position="118"/>
    </location>
    <ligand>
        <name>carbamoyl phosphate</name>
        <dbReference type="ChEBI" id="CHEBI:58228"/>
    </ligand>
</feature>
<feature type="binding site" evidence="2">
    <location>
        <begin position="145"/>
        <end position="148"/>
    </location>
    <ligand>
        <name>carbamoyl phosphate</name>
        <dbReference type="ChEBI" id="CHEBI:58228"/>
    </ligand>
</feature>
<feature type="binding site" evidence="2">
    <location>
        <position position="176"/>
    </location>
    <ligand>
        <name>L-ornithine</name>
        <dbReference type="ChEBI" id="CHEBI:46911"/>
    </ligand>
</feature>
<feature type="binding site" evidence="2">
    <location>
        <position position="240"/>
    </location>
    <ligand>
        <name>L-ornithine</name>
        <dbReference type="ChEBI" id="CHEBI:46911"/>
    </ligand>
</feature>
<feature type="binding site" evidence="2">
    <location>
        <begin position="244"/>
        <end position="245"/>
    </location>
    <ligand>
        <name>L-ornithine</name>
        <dbReference type="ChEBI" id="CHEBI:46911"/>
    </ligand>
</feature>
<feature type="binding site" evidence="2">
    <location>
        <begin position="280"/>
        <end position="281"/>
    </location>
    <ligand>
        <name>carbamoyl phosphate</name>
        <dbReference type="ChEBI" id="CHEBI:58228"/>
    </ligand>
</feature>
<feature type="binding site" evidence="2">
    <location>
        <position position="308"/>
    </location>
    <ligand>
        <name>carbamoyl phosphate</name>
        <dbReference type="ChEBI" id="CHEBI:58228"/>
    </ligand>
</feature>
<evidence type="ECO:0000250" key="1"/>
<evidence type="ECO:0000255" key="2">
    <source>
        <dbReference type="HAMAP-Rule" id="MF_01109"/>
    </source>
</evidence>
<accession>Q8ET05</accession>
<proteinExistence type="inferred from homology"/>
<reference key="1">
    <citation type="journal article" date="2002" name="Nucleic Acids Res.">
        <title>Genome sequence of Oceanobacillus iheyensis isolated from the Iheya Ridge and its unexpected adaptive capabilities to extreme environments.</title>
        <authorList>
            <person name="Takami H."/>
            <person name="Takaki Y."/>
            <person name="Uchiyama I."/>
        </authorList>
    </citation>
    <scope>NUCLEOTIDE SEQUENCE [LARGE SCALE GENOMIC DNA]</scope>
    <source>
        <strain>DSM 14371 / CIP 107618 / JCM 11309 / KCTC 3954 / HTE831</strain>
    </source>
</reference>
<comment type="function">
    <text evidence="1">Reversibly catalyzes the transfer of the carbamoyl group from carbamoyl phosphate (CP) to the N(epsilon) atom of ornithine (ORN) to produce L-citrulline.</text>
</comment>
<comment type="catalytic activity">
    <reaction evidence="2">
        <text>carbamoyl phosphate + L-ornithine = L-citrulline + phosphate + H(+)</text>
        <dbReference type="Rhea" id="RHEA:19513"/>
        <dbReference type="ChEBI" id="CHEBI:15378"/>
        <dbReference type="ChEBI" id="CHEBI:43474"/>
        <dbReference type="ChEBI" id="CHEBI:46911"/>
        <dbReference type="ChEBI" id="CHEBI:57743"/>
        <dbReference type="ChEBI" id="CHEBI:58228"/>
        <dbReference type="EC" id="2.1.3.3"/>
    </reaction>
</comment>
<comment type="pathway">
    <text evidence="2">Amino-acid biosynthesis; L-arginine biosynthesis; L-arginine from L-ornithine and carbamoyl phosphate: step 1/3.</text>
</comment>
<comment type="subcellular location">
    <subcellularLocation>
        <location evidence="2">Cytoplasm</location>
    </subcellularLocation>
</comment>
<comment type="similarity">
    <text evidence="2">Belongs to the aspartate/ornithine carbamoyltransferase superfamily. OTCase family.</text>
</comment>
<keyword id="KW-0028">Amino-acid biosynthesis</keyword>
<keyword id="KW-0055">Arginine biosynthesis</keyword>
<keyword id="KW-0963">Cytoplasm</keyword>
<keyword id="KW-1185">Reference proteome</keyword>
<keyword id="KW-0808">Transferase</keyword>
<organism>
    <name type="scientific">Oceanobacillus iheyensis (strain DSM 14371 / CIP 107618 / JCM 11309 / KCTC 3954 / HTE831)</name>
    <dbReference type="NCBI Taxonomy" id="221109"/>
    <lineage>
        <taxon>Bacteria</taxon>
        <taxon>Bacillati</taxon>
        <taxon>Bacillota</taxon>
        <taxon>Bacilli</taxon>
        <taxon>Bacillales</taxon>
        <taxon>Bacillaceae</taxon>
        <taxon>Oceanobacillus</taxon>
    </lineage>
</organism>
<protein>
    <recommendedName>
        <fullName evidence="2">Ornithine carbamoyltransferase</fullName>
        <shortName evidence="2">OTCase</shortName>
        <ecNumber evidence="2">2.1.3.3</ecNumber>
    </recommendedName>
</protein>
<gene>
    <name evidence="2" type="primary">argF</name>
    <name type="ordered locus">OB0460</name>
</gene>
<name>OTC_OCEIH</name>